<organism>
    <name type="scientific">Methanocaldococcus jannaschii (strain ATCC 43067 / DSM 2661 / JAL-1 / JCM 10045 / NBRC 100440)</name>
    <name type="common">Methanococcus jannaschii</name>
    <dbReference type="NCBI Taxonomy" id="243232"/>
    <lineage>
        <taxon>Archaea</taxon>
        <taxon>Methanobacteriati</taxon>
        <taxon>Methanobacteriota</taxon>
        <taxon>Methanomada group</taxon>
        <taxon>Methanococci</taxon>
        <taxon>Methanococcales</taxon>
        <taxon>Methanocaldococcaceae</taxon>
        <taxon>Methanocaldococcus</taxon>
    </lineage>
</organism>
<name>SCAF_METJA</name>
<dbReference type="EMBL" id="L77117">
    <property type="protein sequence ID" value="AAB99572.1"/>
    <property type="molecule type" value="Genomic_DNA"/>
</dbReference>
<dbReference type="PIR" id="G64493">
    <property type="entry name" value="G64493"/>
</dbReference>
<dbReference type="SMR" id="Q58947"/>
<dbReference type="STRING" id="243232.MJ_1552"/>
<dbReference type="PaxDb" id="243232-MJ_1552"/>
<dbReference type="DNASU" id="1452460"/>
<dbReference type="EnsemblBacteria" id="AAB99572">
    <property type="protein sequence ID" value="AAB99572"/>
    <property type="gene ID" value="MJ_1552"/>
</dbReference>
<dbReference type="KEGG" id="mja:MJ_1552"/>
<dbReference type="eggNOG" id="arCOG01285">
    <property type="taxonomic scope" value="Archaea"/>
</dbReference>
<dbReference type="HOGENOM" id="CLU_119412_2_2_2"/>
<dbReference type="InParanoid" id="Q58947"/>
<dbReference type="PhylomeDB" id="Q58947"/>
<dbReference type="Proteomes" id="UP000000805">
    <property type="component" value="Chromosome"/>
</dbReference>
<dbReference type="GO" id="GO:0046872">
    <property type="term" value="F:metal ion binding"/>
    <property type="evidence" value="ECO:0007669"/>
    <property type="project" value="UniProtKB-KW"/>
</dbReference>
<dbReference type="Gene3D" id="6.10.30.10">
    <property type="match status" value="1"/>
</dbReference>
<dbReference type="InterPro" id="IPR002878">
    <property type="entry name" value="ChsH2_C"/>
</dbReference>
<dbReference type="InterPro" id="IPR022002">
    <property type="entry name" value="ChsH2_Znr"/>
</dbReference>
<dbReference type="InterPro" id="IPR012340">
    <property type="entry name" value="NA-bd_OB-fold"/>
</dbReference>
<dbReference type="InterPro" id="IPR052513">
    <property type="entry name" value="Thioester_dehydratase-like"/>
</dbReference>
<dbReference type="PANTHER" id="PTHR34075">
    <property type="entry name" value="BLR3430 PROTEIN"/>
    <property type="match status" value="1"/>
</dbReference>
<dbReference type="PANTHER" id="PTHR34075:SF5">
    <property type="entry name" value="BLR3430 PROTEIN"/>
    <property type="match status" value="1"/>
</dbReference>
<dbReference type="Pfam" id="PF01796">
    <property type="entry name" value="OB_ChsH2_C"/>
    <property type="match status" value="1"/>
</dbReference>
<dbReference type="Pfam" id="PF12172">
    <property type="entry name" value="zf-ChsH2"/>
    <property type="match status" value="1"/>
</dbReference>
<dbReference type="SUPFAM" id="SSF50249">
    <property type="entry name" value="Nucleic acid-binding proteins"/>
    <property type="match status" value="1"/>
</dbReference>
<reference key="1">
    <citation type="journal article" date="1996" name="Science">
        <title>Complete genome sequence of the methanogenic archaeon, Methanococcus jannaschii.</title>
        <authorList>
            <person name="Bult C.J."/>
            <person name="White O."/>
            <person name="Olsen G.J."/>
            <person name="Zhou L."/>
            <person name="Fleischmann R.D."/>
            <person name="Sutton G.G."/>
            <person name="Blake J.A."/>
            <person name="FitzGerald L.M."/>
            <person name="Clayton R.A."/>
            <person name="Gocayne J.D."/>
            <person name="Kerlavage A.R."/>
            <person name="Dougherty B.A."/>
            <person name="Tomb J.-F."/>
            <person name="Adams M.D."/>
            <person name="Reich C.I."/>
            <person name="Overbeek R."/>
            <person name="Kirkness E.F."/>
            <person name="Weinstock K.G."/>
            <person name="Merrick J.M."/>
            <person name="Glodek A."/>
            <person name="Scott J.L."/>
            <person name="Geoghagen N.S.M."/>
            <person name="Weidman J.F."/>
            <person name="Fuhrmann J.L."/>
            <person name="Nguyen D."/>
            <person name="Utterback T.R."/>
            <person name="Kelley J.M."/>
            <person name="Peterson J.D."/>
            <person name="Sadow P.W."/>
            <person name="Hanna M.C."/>
            <person name="Cotton M.D."/>
            <person name="Roberts K.M."/>
            <person name="Hurst M.A."/>
            <person name="Kaine B.P."/>
            <person name="Borodovsky M."/>
            <person name="Klenk H.-P."/>
            <person name="Fraser C.M."/>
            <person name="Smith H.O."/>
            <person name="Woese C.R."/>
            <person name="Venter J.C."/>
        </authorList>
    </citation>
    <scope>NUCLEOTIDE SEQUENCE [LARGE SCALE GENOMIC DNA]</scope>
    <source>
        <strain>ATCC 43067 / DSM 2661 / JAL-1 / JCM 10045 / NBRC 100440</strain>
    </source>
</reference>
<accession>Q58947</accession>
<keyword id="KW-0479">Metal-binding</keyword>
<keyword id="KW-1185">Reference proteome</keyword>
<keyword id="KW-0862">Zinc</keyword>
<proteinExistence type="inferred from homology"/>
<sequence length="141" mass="16390">MGIKYLLRDKMVVRSWRHIKERYCLIGVRCKNCGTVYFPSREICPKCRRKTEFEEIKLSGKGKVYTYSVVHVAPKDFEKQAPYVIAIIELEEGARITGQIVDCKPEDVYIGMQVEAVFRRIKEDGDDGVITYGYKFKPIEN</sequence>
<feature type="chain" id="PRO_0000107408" description="DUF35 domain-containing scaffold protein">
    <location>
        <begin position="1"/>
        <end position="141"/>
    </location>
</feature>
<feature type="binding site" evidence="1">
    <location>
        <position position="30"/>
    </location>
    <ligand>
        <name>Zn(2+)</name>
        <dbReference type="ChEBI" id="CHEBI:29105"/>
    </ligand>
</feature>
<feature type="binding site" evidence="1">
    <location>
        <position position="33"/>
    </location>
    <ligand>
        <name>Zn(2+)</name>
        <dbReference type="ChEBI" id="CHEBI:29105"/>
    </ligand>
</feature>
<feature type="binding site" evidence="1">
    <location>
        <position position="44"/>
    </location>
    <ligand>
        <name>Zn(2+)</name>
        <dbReference type="ChEBI" id="CHEBI:29105"/>
    </ligand>
</feature>
<feature type="binding site" evidence="1">
    <location>
        <position position="47"/>
    </location>
    <ligand>
        <name>Zn(2+)</name>
        <dbReference type="ChEBI" id="CHEBI:29105"/>
    </ligand>
</feature>
<comment type="function">
    <text evidence="1">Functions as a scaffold to connect the acetoacetyl-CoA thiolase and HMG-CoA synthase (HMGCS) dimers in the channeling thiolase/HMGCS complex, which allows for efficient coupling of the endergonic thiolase reaction with the exergonic HMGCS reaction.</text>
</comment>
<comment type="subunit">
    <text evidence="1">Interacts with acetoacetyl-CoA thiolase and HMG-CoA synthase (HMGCS) that catalyzes the first and second step in the mevalonate pathway, respectively.</text>
</comment>
<comment type="similarity">
    <text evidence="2">Belongs to the scaffold protein DUF35 family.</text>
</comment>
<gene>
    <name type="ordered locus">MJ1552</name>
</gene>
<evidence type="ECO:0000250" key="1">
    <source>
        <dbReference type="UniProtKB" id="A0A384E139"/>
    </source>
</evidence>
<evidence type="ECO:0000305" key="2"/>
<protein>
    <recommendedName>
        <fullName evidence="2">DUF35 domain-containing scaffold protein</fullName>
    </recommendedName>
</protein>